<keyword id="KW-0963">Cytoplasm</keyword>
<keyword id="KW-0489">Methyltransferase</keyword>
<keyword id="KW-0694">RNA-binding</keyword>
<keyword id="KW-0698">rRNA processing</keyword>
<keyword id="KW-0949">S-adenosyl-L-methionine</keyword>
<keyword id="KW-0808">Transferase</keyword>
<proteinExistence type="inferred from homology"/>
<protein>
    <recommendedName>
        <fullName evidence="1">Ribosomal RNA large subunit methyltransferase K/L</fullName>
    </recommendedName>
    <domain>
        <recommendedName>
            <fullName evidence="1">23S rRNA m2G2445 methyltransferase</fullName>
            <ecNumber evidence="1">2.1.1.173</ecNumber>
        </recommendedName>
        <alternativeName>
            <fullName evidence="1">rRNA (guanine-N(2)-)-methyltransferase RlmL</fullName>
        </alternativeName>
    </domain>
    <domain>
        <recommendedName>
            <fullName evidence="1">23S rRNA m7G2069 methyltransferase</fullName>
            <ecNumber evidence="1">2.1.1.264</ecNumber>
        </recommendedName>
        <alternativeName>
            <fullName evidence="1">rRNA (guanine-N(7)-)-methyltransferase RlmK</fullName>
        </alternativeName>
    </domain>
</protein>
<reference key="1">
    <citation type="journal article" date="2008" name="Genome Res.">
        <title>Comparative genome analysis of Salmonella enteritidis PT4 and Salmonella gallinarum 287/91 provides insights into evolutionary and host adaptation pathways.</title>
        <authorList>
            <person name="Thomson N.R."/>
            <person name="Clayton D.J."/>
            <person name="Windhorst D."/>
            <person name="Vernikos G."/>
            <person name="Davidson S."/>
            <person name="Churcher C."/>
            <person name="Quail M.A."/>
            <person name="Stevens M."/>
            <person name="Jones M.A."/>
            <person name="Watson M."/>
            <person name="Barron A."/>
            <person name="Layton A."/>
            <person name="Pickard D."/>
            <person name="Kingsley R.A."/>
            <person name="Bignell A."/>
            <person name="Clark L."/>
            <person name="Harris B."/>
            <person name="Ormond D."/>
            <person name="Abdellah Z."/>
            <person name="Brooks K."/>
            <person name="Cherevach I."/>
            <person name="Chillingworth T."/>
            <person name="Woodward J."/>
            <person name="Norberczak H."/>
            <person name="Lord A."/>
            <person name="Arrowsmith C."/>
            <person name="Jagels K."/>
            <person name="Moule S."/>
            <person name="Mungall K."/>
            <person name="Saunders M."/>
            <person name="Whitehead S."/>
            <person name="Chabalgoity J.A."/>
            <person name="Maskell D."/>
            <person name="Humphreys T."/>
            <person name="Roberts M."/>
            <person name="Barrow P.A."/>
            <person name="Dougan G."/>
            <person name="Parkhill J."/>
        </authorList>
    </citation>
    <scope>NUCLEOTIDE SEQUENCE [LARGE SCALE GENOMIC DNA]</scope>
    <source>
        <strain>287/91 / NCTC 13346</strain>
    </source>
</reference>
<sequence>MNSLFASTARGLEELLKTELEKLGAVGCQVVQGGVHFQGDTRLIYQSLMWSRLASRIILPMGECKVYSDLDLYLGVQAINWTEIFNPGATFAVHFSGLNDTIRNSQYGAMKVKDAIVDAFTRKNLPRPNVDRESPDLRINVWLNKETASIALDLSGDGLHLRGYRDRTGLAPIKETLAAAIVMRSGWQPGTPLLDPMCGSGTLLIEAAMWATDRAPGLHRGHWGFSGWAQHDETIWQEVKAEAQTRARKGLAEYSSHFYGSDSDARVIERARSNARRAGIGELITFEVKDVAQLSNPLPKGPYGTVISNPPYGERLDSEPALIALHSLLGRTMKNQFGGWNLSLFSASPDLLGSLQLRADKQFKAKNGPLDCVQKNYHIAETTADSKPATVAEDYANRLRKNLKKLEKWARQEGIECYRLYDADLPEYNVAVDRYGDWAVIQEYAPPKTVDAQKARQRLFDIIAATLSVLGIPPNKLVLKTRERQKGKNQYQKMSEKGEFLDVSEYNARLWVNLTDYLDTGLFLDHRIARRMLGEMSKGKDFLNLFSYTGSASVHAGLGGARSTTTVDMSRTYLEWAERNLRLNGLSGRAHRLIQADCLGWLREANEQFDLIFIDPPTFSNSKRMEESFDVQRDHVALMKDLKRLLRKGGTIMFSNNKRGFRMDLEGLAELGLTAQEITQKTLSPDFARNRQIHNCWLIRAA</sequence>
<organism>
    <name type="scientific">Salmonella gallinarum (strain 287/91 / NCTC 13346)</name>
    <dbReference type="NCBI Taxonomy" id="550538"/>
    <lineage>
        <taxon>Bacteria</taxon>
        <taxon>Pseudomonadati</taxon>
        <taxon>Pseudomonadota</taxon>
        <taxon>Gammaproteobacteria</taxon>
        <taxon>Enterobacterales</taxon>
        <taxon>Enterobacteriaceae</taxon>
        <taxon>Salmonella</taxon>
    </lineage>
</organism>
<accession>B5R6B4</accession>
<feature type="chain" id="PRO_0000366809" description="Ribosomal RNA large subunit methyltransferase K/L">
    <location>
        <begin position="1"/>
        <end position="702"/>
    </location>
</feature>
<feature type="domain" description="THUMP" evidence="1">
    <location>
        <begin position="43"/>
        <end position="154"/>
    </location>
</feature>
<gene>
    <name evidence="1" type="primary">rlmL</name>
    <name type="ordered locus">SG0951</name>
</gene>
<dbReference type="EC" id="2.1.1.173" evidence="1"/>
<dbReference type="EC" id="2.1.1.264" evidence="1"/>
<dbReference type="EMBL" id="AM933173">
    <property type="protein sequence ID" value="CAR36841.1"/>
    <property type="molecule type" value="Genomic_DNA"/>
</dbReference>
<dbReference type="SMR" id="B5R6B4"/>
<dbReference type="KEGG" id="seg:SG0951"/>
<dbReference type="HOGENOM" id="CLU_014042_2_0_6"/>
<dbReference type="Proteomes" id="UP000008321">
    <property type="component" value="Chromosome"/>
</dbReference>
<dbReference type="GO" id="GO:0005737">
    <property type="term" value="C:cytoplasm"/>
    <property type="evidence" value="ECO:0007669"/>
    <property type="project" value="UniProtKB-SubCell"/>
</dbReference>
<dbReference type="GO" id="GO:0052915">
    <property type="term" value="F:23S rRNA (guanine(2445)-N(2))-methyltransferase activity"/>
    <property type="evidence" value="ECO:0007669"/>
    <property type="project" value="UniProtKB-UniRule"/>
</dbReference>
<dbReference type="GO" id="GO:0003723">
    <property type="term" value="F:RNA binding"/>
    <property type="evidence" value="ECO:0007669"/>
    <property type="project" value="UniProtKB-KW"/>
</dbReference>
<dbReference type="GO" id="GO:0070043">
    <property type="term" value="F:rRNA (guanine-N7-)-methyltransferase activity"/>
    <property type="evidence" value="ECO:0007669"/>
    <property type="project" value="UniProtKB-UniRule"/>
</dbReference>
<dbReference type="CDD" id="cd02440">
    <property type="entry name" value="AdoMet_MTases"/>
    <property type="match status" value="2"/>
</dbReference>
<dbReference type="CDD" id="cd11715">
    <property type="entry name" value="THUMP_AdoMetMT"/>
    <property type="match status" value="1"/>
</dbReference>
<dbReference type="FunFam" id="3.30.750.80:FF:000001">
    <property type="entry name" value="Ribosomal RNA large subunit methyltransferase K/L"/>
    <property type="match status" value="1"/>
</dbReference>
<dbReference type="FunFam" id="3.40.50.150:FF:000039">
    <property type="entry name" value="Ribosomal RNA large subunit methyltransferase K/L"/>
    <property type="match status" value="1"/>
</dbReference>
<dbReference type="Gene3D" id="3.30.2130.30">
    <property type="match status" value="1"/>
</dbReference>
<dbReference type="Gene3D" id="3.30.750.80">
    <property type="entry name" value="RNA methyltransferase domain (HRMD) like"/>
    <property type="match status" value="1"/>
</dbReference>
<dbReference type="Gene3D" id="3.40.50.150">
    <property type="entry name" value="Vaccinia Virus protein VP39"/>
    <property type="match status" value="2"/>
</dbReference>
<dbReference type="HAMAP" id="MF_01858">
    <property type="entry name" value="23SrRNA_methyltr_KL"/>
    <property type="match status" value="1"/>
</dbReference>
<dbReference type="InterPro" id="IPR017244">
    <property type="entry name" value="23SrRNA_methyltr_KL"/>
</dbReference>
<dbReference type="InterPro" id="IPR002052">
    <property type="entry name" value="DNA_methylase_N6_adenine_CS"/>
</dbReference>
<dbReference type="InterPro" id="IPR000241">
    <property type="entry name" value="RlmKL-like_Mtase"/>
</dbReference>
<dbReference type="InterPro" id="IPR053943">
    <property type="entry name" value="RlmKL-like_Mtase_CS"/>
</dbReference>
<dbReference type="InterPro" id="IPR054170">
    <property type="entry name" value="RlmL_1st"/>
</dbReference>
<dbReference type="InterPro" id="IPR019614">
    <property type="entry name" value="SAM-dep_methyl-trfase"/>
</dbReference>
<dbReference type="InterPro" id="IPR029063">
    <property type="entry name" value="SAM-dependent_MTases_sf"/>
</dbReference>
<dbReference type="InterPro" id="IPR004114">
    <property type="entry name" value="THUMP_dom"/>
</dbReference>
<dbReference type="NCBIfam" id="NF008748">
    <property type="entry name" value="PRK11783.1"/>
    <property type="match status" value="1"/>
</dbReference>
<dbReference type="PANTHER" id="PTHR47313">
    <property type="entry name" value="RIBOSOMAL RNA LARGE SUBUNIT METHYLTRANSFERASE K/L"/>
    <property type="match status" value="1"/>
</dbReference>
<dbReference type="PANTHER" id="PTHR47313:SF1">
    <property type="entry name" value="RIBOSOMAL RNA LARGE SUBUNIT METHYLTRANSFERASE K_L"/>
    <property type="match status" value="1"/>
</dbReference>
<dbReference type="Pfam" id="PF10672">
    <property type="entry name" value="Methyltrans_SAM"/>
    <property type="match status" value="1"/>
</dbReference>
<dbReference type="Pfam" id="PF22020">
    <property type="entry name" value="RlmL_1st"/>
    <property type="match status" value="1"/>
</dbReference>
<dbReference type="Pfam" id="PF02926">
    <property type="entry name" value="THUMP"/>
    <property type="match status" value="1"/>
</dbReference>
<dbReference type="Pfam" id="PF01170">
    <property type="entry name" value="UPF0020"/>
    <property type="match status" value="1"/>
</dbReference>
<dbReference type="PIRSF" id="PIRSF037618">
    <property type="entry name" value="RNA_Mtase_bacteria_prd"/>
    <property type="match status" value="1"/>
</dbReference>
<dbReference type="PRINTS" id="PR00507">
    <property type="entry name" value="N12N6MTFRASE"/>
</dbReference>
<dbReference type="SMART" id="SM00981">
    <property type="entry name" value="THUMP"/>
    <property type="match status" value="1"/>
</dbReference>
<dbReference type="SUPFAM" id="SSF53335">
    <property type="entry name" value="S-adenosyl-L-methionine-dependent methyltransferases"/>
    <property type="match status" value="2"/>
</dbReference>
<dbReference type="PROSITE" id="PS51165">
    <property type="entry name" value="THUMP"/>
    <property type="match status" value="1"/>
</dbReference>
<dbReference type="PROSITE" id="PS01261">
    <property type="entry name" value="UPF0020"/>
    <property type="match status" value="1"/>
</dbReference>
<comment type="function">
    <text evidence="1">Specifically methylates the guanine in position 2445 (m2G2445) and the guanine in position 2069 (m7G2069) of 23S rRNA.</text>
</comment>
<comment type="catalytic activity">
    <reaction evidence="1">
        <text>guanosine(2445) in 23S rRNA + S-adenosyl-L-methionine = N(2)-methylguanosine(2445) in 23S rRNA + S-adenosyl-L-homocysteine + H(+)</text>
        <dbReference type="Rhea" id="RHEA:42740"/>
        <dbReference type="Rhea" id="RHEA-COMP:10215"/>
        <dbReference type="Rhea" id="RHEA-COMP:10216"/>
        <dbReference type="ChEBI" id="CHEBI:15378"/>
        <dbReference type="ChEBI" id="CHEBI:57856"/>
        <dbReference type="ChEBI" id="CHEBI:59789"/>
        <dbReference type="ChEBI" id="CHEBI:74269"/>
        <dbReference type="ChEBI" id="CHEBI:74481"/>
        <dbReference type="EC" id="2.1.1.173"/>
    </reaction>
</comment>
<comment type="catalytic activity">
    <reaction evidence="1">
        <text>guanosine(2069) in 23S rRNA + S-adenosyl-L-methionine = N(2)-methylguanosine(2069) in 23S rRNA + S-adenosyl-L-homocysteine + H(+)</text>
        <dbReference type="Rhea" id="RHEA:43772"/>
        <dbReference type="Rhea" id="RHEA-COMP:10688"/>
        <dbReference type="Rhea" id="RHEA-COMP:10689"/>
        <dbReference type="ChEBI" id="CHEBI:15378"/>
        <dbReference type="ChEBI" id="CHEBI:57856"/>
        <dbReference type="ChEBI" id="CHEBI:59789"/>
        <dbReference type="ChEBI" id="CHEBI:74269"/>
        <dbReference type="ChEBI" id="CHEBI:74481"/>
        <dbReference type="EC" id="2.1.1.264"/>
    </reaction>
</comment>
<comment type="subcellular location">
    <subcellularLocation>
        <location evidence="1">Cytoplasm</location>
    </subcellularLocation>
</comment>
<comment type="similarity">
    <text evidence="1">Belongs to the methyltransferase superfamily. RlmKL family.</text>
</comment>
<evidence type="ECO:0000255" key="1">
    <source>
        <dbReference type="HAMAP-Rule" id="MF_01858"/>
    </source>
</evidence>
<name>RLMKL_SALG2</name>